<dbReference type="EMBL" id="CP000485">
    <property type="protein sequence ID" value="ABK86905.1"/>
    <property type="molecule type" value="Genomic_DNA"/>
</dbReference>
<dbReference type="RefSeq" id="WP_000376225.1">
    <property type="nucleotide sequence ID" value="NC_008600.1"/>
</dbReference>
<dbReference type="SMR" id="A0RI62"/>
<dbReference type="GeneID" id="45023946"/>
<dbReference type="KEGG" id="btl:BALH_3673"/>
<dbReference type="HOGENOM" id="CLU_045647_5_3_9"/>
<dbReference type="GO" id="GO:0005737">
    <property type="term" value="C:cytoplasm"/>
    <property type="evidence" value="ECO:0007669"/>
    <property type="project" value="UniProtKB-SubCell"/>
</dbReference>
<dbReference type="GO" id="GO:0051301">
    <property type="term" value="P:cell division"/>
    <property type="evidence" value="ECO:0007669"/>
    <property type="project" value="UniProtKB-KW"/>
</dbReference>
<dbReference type="GO" id="GO:0051304">
    <property type="term" value="P:chromosome separation"/>
    <property type="evidence" value="ECO:0007669"/>
    <property type="project" value="InterPro"/>
</dbReference>
<dbReference type="GO" id="GO:0006260">
    <property type="term" value="P:DNA replication"/>
    <property type="evidence" value="ECO:0007669"/>
    <property type="project" value="UniProtKB-UniRule"/>
</dbReference>
<dbReference type="Gene3D" id="1.10.10.10">
    <property type="entry name" value="Winged helix-like DNA-binding domain superfamily/Winged helix DNA-binding domain"/>
    <property type="match status" value="2"/>
</dbReference>
<dbReference type="HAMAP" id="MF_01804">
    <property type="entry name" value="ScpB"/>
    <property type="match status" value="1"/>
</dbReference>
<dbReference type="InterPro" id="IPR005234">
    <property type="entry name" value="ScpB_csome_segregation"/>
</dbReference>
<dbReference type="InterPro" id="IPR036388">
    <property type="entry name" value="WH-like_DNA-bd_sf"/>
</dbReference>
<dbReference type="InterPro" id="IPR036390">
    <property type="entry name" value="WH_DNA-bd_sf"/>
</dbReference>
<dbReference type="NCBIfam" id="TIGR00281">
    <property type="entry name" value="SMC-Scp complex subunit ScpB"/>
    <property type="match status" value="1"/>
</dbReference>
<dbReference type="PANTHER" id="PTHR34298">
    <property type="entry name" value="SEGREGATION AND CONDENSATION PROTEIN B"/>
    <property type="match status" value="1"/>
</dbReference>
<dbReference type="PANTHER" id="PTHR34298:SF2">
    <property type="entry name" value="SEGREGATION AND CONDENSATION PROTEIN B"/>
    <property type="match status" value="1"/>
</dbReference>
<dbReference type="Pfam" id="PF04079">
    <property type="entry name" value="SMC_ScpB"/>
    <property type="match status" value="1"/>
</dbReference>
<dbReference type="PIRSF" id="PIRSF019345">
    <property type="entry name" value="ScpB"/>
    <property type="match status" value="1"/>
</dbReference>
<dbReference type="SUPFAM" id="SSF46785">
    <property type="entry name" value="Winged helix' DNA-binding domain"/>
    <property type="match status" value="2"/>
</dbReference>
<organism>
    <name type="scientific">Bacillus thuringiensis (strain Al Hakam)</name>
    <dbReference type="NCBI Taxonomy" id="412694"/>
    <lineage>
        <taxon>Bacteria</taxon>
        <taxon>Bacillati</taxon>
        <taxon>Bacillota</taxon>
        <taxon>Bacilli</taxon>
        <taxon>Bacillales</taxon>
        <taxon>Bacillaceae</taxon>
        <taxon>Bacillus</taxon>
        <taxon>Bacillus cereus group</taxon>
    </lineage>
</organism>
<comment type="function">
    <text evidence="1">Participates in chromosomal partition during cell division. May act via the formation of a condensin-like complex containing Smc and ScpA that pull DNA away from mid-cell into both cell halves.</text>
</comment>
<comment type="subunit">
    <text evidence="1">Homodimer. Homodimerization may be required to stabilize the binding of ScpA to the Smc head domains. Component of a cohesin-like complex composed of ScpA, ScpB and the Smc homodimer, in which ScpA and ScpB bind to the head domain of Smc. The presence of the three proteins is required for the association of the complex with DNA.</text>
</comment>
<comment type="subcellular location">
    <subcellularLocation>
        <location evidence="1">Cytoplasm</location>
    </subcellularLocation>
    <text evidence="1">Associated with two foci at the outer edges of the nucleoid region in young cells, and at four foci within both cell halves in older cells.</text>
</comment>
<comment type="similarity">
    <text evidence="1">Belongs to the ScpB family.</text>
</comment>
<protein>
    <recommendedName>
        <fullName evidence="1">Segregation and condensation protein B</fullName>
    </recommendedName>
</protein>
<evidence type="ECO:0000255" key="1">
    <source>
        <dbReference type="HAMAP-Rule" id="MF_01804"/>
    </source>
</evidence>
<reference key="1">
    <citation type="journal article" date="2007" name="J. Bacteriol.">
        <title>The complete genome sequence of Bacillus thuringiensis Al Hakam.</title>
        <authorList>
            <person name="Challacombe J.F."/>
            <person name="Altherr M.R."/>
            <person name="Xie G."/>
            <person name="Bhotika S.S."/>
            <person name="Brown N."/>
            <person name="Bruce D."/>
            <person name="Campbell C.S."/>
            <person name="Campbell M.L."/>
            <person name="Chen J."/>
            <person name="Chertkov O."/>
            <person name="Cleland C."/>
            <person name="Dimitrijevic M."/>
            <person name="Doggett N.A."/>
            <person name="Fawcett J.J."/>
            <person name="Glavina T."/>
            <person name="Goodwin L.A."/>
            <person name="Green L.D."/>
            <person name="Han C.S."/>
            <person name="Hill K.K."/>
            <person name="Hitchcock P."/>
            <person name="Jackson P.J."/>
            <person name="Keim P."/>
            <person name="Kewalramani A.R."/>
            <person name="Longmire J."/>
            <person name="Lucas S."/>
            <person name="Malfatti S."/>
            <person name="Martinez D."/>
            <person name="McMurry K."/>
            <person name="Meincke L.J."/>
            <person name="Misra M."/>
            <person name="Moseman B.L."/>
            <person name="Mundt M."/>
            <person name="Munk A.C."/>
            <person name="Okinaka R.T."/>
            <person name="Parson-Quintana B."/>
            <person name="Reilly L.P."/>
            <person name="Richardson P."/>
            <person name="Robinson D.L."/>
            <person name="Saunders E."/>
            <person name="Tapia R."/>
            <person name="Tesmer J.G."/>
            <person name="Thayer N."/>
            <person name="Thompson L.S."/>
            <person name="Tice H."/>
            <person name="Ticknor L.O."/>
            <person name="Wills P.L."/>
            <person name="Gilna P."/>
            <person name="Brettin T.S."/>
        </authorList>
    </citation>
    <scope>NUCLEOTIDE SEQUENCE [LARGE SCALE GENOMIC DNA]</scope>
    <source>
        <strain>Al Hakam</strain>
    </source>
</reference>
<proteinExistence type="inferred from homology"/>
<keyword id="KW-0131">Cell cycle</keyword>
<keyword id="KW-0132">Cell division</keyword>
<keyword id="KW-0159">Chromosome partition</keyword>
<keyword id="KW-0963">Cytoplasm</keyword>
<gene>
    <name evidence="1" type="primary">scpB</name>
    <name type="ordered locus">BALH_3673</name>
</gene>
<feature type="chain" id="PRO_1000069949" description="Segregation and condensation protein B">
    <location>
        <begin position="1"/>
        <end position="190"/>
    </location>
</feature>
<accession>A0RI62</accession>
<sequence>MDRTEQKSIIEGLLFVSGDEGIYPEQIAKVLEIEGNEVIDILEEMQKECEGAHRGLQIVQYAKVYRFATKKEHASYYQKLIEIPTAASLSQAALETLAIVAYRQPITRTEMEEIRGVKTDKALQTLVSHLLIKEMGRAEGPGRPILYGTTKEFLDTFGLKTLDDLPPLSEENEQMNEADLFFGSLQEISK</sequence>
<name>SCPB_BACAH</name>